<proteinExistence type="evidence at transcript level"/>
<dbReference type="EMBL" id="AP002034">
    <property type="protein sequence ID" value="BAB02245.1"/>
    <property type="molecule type" value="Genomic_DNA"/>
</dbReference>
<dbReference type="EMBL" id="CP002686">
    <property type="protein sequence ID" value="AEE76412.1"/>
    <property type="molecule type" value="Genomic_DNA"/>
</dbReference>
<dbReference type="EMBL" id="DQ446679">
    <property type="protein sequence ID" value="ABE65952.1"/>
    <property type="molecule type" value="mRNA"/>
</dbReference>
<dbReference type="RefSeq" id="NP_188705.1">
    <molecule id="Q1PEN8-1"/>
    <property type="nucleotide sequence ID" value="NM_112960.1"/>
</dbReference>
<dbReference type="FunCoup" id="Q1PEN8">
    <property type="interactions" value="1"/>
</dbReference>
<dbReference type="PaxDb" id="3702-AT3G20690.1"/>
<dbReference type="EnsemblPlants" id="AT3G20690.1">
    <molecule id="Q1PEN8-1"/>
    <property type="protein sequence ID" value="AT3G20690.1"/>
    <property type="gene ID" value="AT3G20690"/>
</dbReference>
<dbReference type="GeneID" id="821616"/>
<dbReference type="Gramene" id="AT3G20690.1">
    <molecule id="Q1PEN8-1"/>
    <property type="protein sequence ID" value="AT3G20690.1"/>
    <property type="gene ID" value="AT3G20690"/>
</dbReference>
<dbReference type="KEGG" id="ath:AT3G20690"/>
<dbReference type="Araport" id="AT3G20690"/>
<dbReference type="TAIR" id="AT3G20690"/>
<dbReference type="HOGENOM" id="CLU_034692_0_0_1"/>
<dbReference type="InParanoid" id="Q1PEN8"/>
<dbReference type="OMA" id="HIRNVAR"/>
<dbReference type="OrthoDB" id="610337at2759"/>
<dbReference type="PhylomeDB" id="Q1PEN8"/>
<dbReference type="PRO" id="PR:Q1PEN8"/>
<dbReference type="Proteomes" id="UP000006548">
    <property type="component" value="Chromosome 3"/>
</dbReference>
<dbReference type="ExpressionAtlas" id="Q1PEN8">
    <property type="expression patterns" value="baseline and differential"/>
</dbReference>
<dbReference type="CDD" id="cd22157">
    <property type="entry name" value="F-box_AtFBW1-like"/>
    <property type="match status" value="1"/>
</dbReference>
<dbReference type="Gene3D" id="1.20.1280.50">
    <property type="match status" value="1"/>
</dbReference>
<dbReference type="InterPro" id="IPR006527">
    <property type="entry name" value="F-box-assoc_dom_typ1"/>
</dbReference>
<dbReference type="InterPro" id="IPR017451">
    <property type="entry name" value="F-box-assoc_interact_dom"/>
</dbReference>
<dbReference type="InterPro" id="IPR036047">
    <property type="entry name" value="F-box-like_dom_sf"/>
</dbReference>
<dbReference type="InterPro" id="IPR001810">
    <property type="entry name" value="F-box_dom"/>
</dbReference>
<dbReference type="InterPro" id="IPR050796">
    <property type="entry name" value="SCF_F-box_component"/>
</dbReference>
<dbReference type="NCBIfam" id="TIGR01640">
    <property type="entry name" value="F_box_assoc_1"/>
    <property type="match status" value="1"/>
</dbReference>
<dbReference type="PANTHER" id="PTHR31672">
    <property type="entry name" value="BNACNNG10540D PROTEIN"/>
    <property type="match status" value="1"/>
</dbReference>
<dbReference type="PANTHER" id="PTHR31672:SF10">
    <property type="entry name" value="F-BOX DOMAIN-CONTAINING PROTEIN"/>
    <property type="match status" value="1"/>
</dbReference>
<dbReference type="Pfam" id="PF00646">
    <property type="entry name" value="F-box"/>
    <property type="match status" value="1"/>
</dbReference>
<dbReference type="Pfam" id="PF07734">
    <property type="entry name" value="FBA_1"/>
    <property type="match status" value="1"/>
</dbReference>
<dbReference type="SMART" id="SM00256">
    <property type="entry name" value="FBOX"/>
    <property type="match status" value="1"/>
</dbReference>
<dbReference type="SUPFAM" id="SSF81383">
    <property type="entry name" value="F-box domain"/>
    <property type="match status" value="1"/>
</dbReference>
<dbReference type="PROSITE" id="PS50181">
    <property type="entry name" value="FBOX"/>
    <property type="match status" value="1"/>
</dbReference>
<reference key="1">
    <citation type="journal article" date="2000" name="DNA Res.">
        <title>Structural analysis of Arabidopsis thaliana chromosome 3. II. Sequence features of the 4,251,695 bp regions covered by 90 P1, TAC and BAC clones.</title>
        <authorList>
            <person name="Kaneko T."/>
            <person name="Katoh T."/>
            <person name="Sato S."/>
            <person name="Nakamura Y."/>
            <person name="Asamizu E."/>
            <person name="Tabata S."/>
        </authorList>
    </citation>
    <scope>NUCLEOTIDE SEQUENCE [LARGE SCALE GENOMIC DNA]</scope>
    <source>
        <strain>cv. Columbia</strain>
    </source>
</reference>
<reference key="2">
    <citation type="journal article" date="2017" name="Plant J.">
        <title>Araport11: a complete reannotation of the Arabidopsis thaliana reference genome.</title>
        <authorList>
            <person name="Cheng C.Y."/>
            <person name="Krishnakumar V."/>
            <person name="Chan A.P."/>
            <person name="Thibaud-Nissen F."/>
            <person name="Schobel S."/>
            <person name="Town C.D."/>
        </authorList>
    </citation>
    <scope>GENOME REANNOTATION</scope>
    <source>
        <strain>cv. Columbia</strain>
    </source>
</reference>
<reference key="3">
    <citation type="journal article" date="2006" name="Plant Biotechnol. J.">
        <title>Simultaneous high-throughput recombinational cloning of open reading frames in closed and open configurations.</title>
        <authorList>
            <person name="Underwood B.A."/>
            <person name="Vanderhaeghen R."/>
            <person name="Whitford R."/>
            <person name="Town C.D."/>
            <person name="Hilson P."/>
        </authorList>
    </citation>
    <scope>NUCLEOTIDE SEQUENCE [LARGE SCALE MRNA] (ISOFORM 2)</scope>
    <source>
        <strain>cv. Columbia</strain>
    </source>
</reference>
<evidence type="ECO:0000255" key="1">
    <source>
        <dbReference type="PROSITE-ProRule" id="PRU00080"/>
    </source>
</evidence>
<evidence type="ECO:0000303" key="2">
    <source>
    </source>
</evidence>
<keyword id="KW-0025">Alternative splicing</keyword>
<keyword id="KW-1185">Reference proteome</keyword>
<protein>
    <recommendedName>
        <fullName>F-box protein At3g20690</fullName>
    </recommendedName>
</protein>
<sequence length="370" mass="43123">MMMSDLPHDLVEEILSRLPLISLKAMRSTCKTWNVLSKHRSFANKHIGNVTASGKRDLIMIKDCKVYSIGVNLHGIQNNNNIIDLSIKNKGILHLENLDLIFKEIFNVFHCNGLLLLYGSITDDSIRLVVCNPYWGKREWVKRINNFASFDKLAFGYDKSCGCHKILRVFDSYPNRLEIYNLRSNSRMVSSFPLKWDIAFMQDGVSLKGNTYWYAKDRRSEDCYLICFDFTRERFGPRLPLPQPFIDEFLGSLYVVREEKLAVLVKRWRGGKSEIDIWVTNKIEPDEVSWSKFLKVDNTPRFFLTEGYLIYDEEKVVVFFNKEETEGLKSTVHIAYIVGENGYFRRADLREPLYQPLCRLVCSYVPSSVK</sequence>
<organism>
    <name type="scientific">Arabidopsis thaliana</name>
    <name type="common">Mouse-ear cress</name>
    <dbReference type="NCBI Taxonomy" id="3702"/>
    <lineage>
        <taxon>Eukaryota</taxon>
        <taxon>Viridiplantae</taxon>
        <taxon>Streptophyta</taxon>
        <taxon>Embryophyta</taxon>
        <taxon>Tracheophyta</taxon>
        <taxon>Spermatophyta</taxon>
        <taxon>Magnoliopsida</taxon>
        <taxon>eudicotyledons</taxon>
        <taxon>Gunneridae</taxon>
        <taxon>Pentapetalae</taxon>
        <taxon>rosids</taxon>
        <taxon>malvids</taxon>
        <taxon>Brassicales</taxon>
        <taxon>Brassicaceae</taxon>
        <taxon>Camelineae</taxon>
        <taxon>Arabidopsis</taxon>
    </lineage>
</organism>
<name>FB168_ARATH</name>
<gene>
    <name type="ordered locus">At3g20690</name>
    <name type="ORF">F3H11.8</name>
</gene>
<accession>Q1PEN8</accession>
<accession>Q9LHQ3</accession>
<comment type="alternative products">
    <event type="alternative splicing"/>
    <isoform>
        <id>Q1PEN8-1</id>
        <name>1</name>
        <sequence type="displayed"/>
    </isoform>
    <isoform>
        <id>Q1PEN8-2</id>
        <name>2</name>
        <sequence type="described" ref="VSP_036631 VSP_036632"/>
    </isoform>
</comment>
<feature type="chain" id="PRO_0000283438" description="F-box protein At3g20690">
    <location>
        <begin position="1"/>
        <end position="370"/>
    </location>
</feature>
<feature type="domain" description="F-box" evidence="1">
    <location>
        <begin position="1"/>
        <end position="45"/>
    </location>
</feature>
<feature type="splice variant" id="VSP_036631" description="In isoform 2." evidence="2">
    <original>GILHLENLDLIFKEIFNVFHCNGL</original>
    <variation>ERDSDRVCLYLNPSSMNFWGVYMW</variation>
    <location>
        <begin position="91"/>
        <end position="114"/>
    </location>
</feature>
<feature type="splice variant" id="VSP_036632" description="In isoform 2." evidence="2">
    <location>
        <begin position="115"/>
        <end position="370"/>
    </location>
</feature>